<name>PG122_VAR67</name>
<organism>
    <name type="scientific">Variola virus (isolate Human/India/Ind3/1967)</name>
    <name type="common">VARV</name>
    <name type="synonym">Smallpox virus</name>
    <dbReference type="NCBI Taxonomy" id="587200"/>
    <lineage>
        <taxon>Viruses</taxon>
        <taxon>Varidnaviria</taxon>
        <taxon>Bamfordvirae</taxon>
        <taxon>Nucleocytoviricota</taxon>
        <taxon>Pokkesviricetes</taxon>
        <taxon>Chitovirales</taxon>
        <taxon>Poxviridae</taxon>
        <taxon>Chordopoxvirinae</taxon>
        <taxon>Orthopoxvirus</taxon>
        <taxon>Variola virus</taxon>
    </lineage>
</organism>
<comment type="function">
    <text evidence="2">Decapping enzyme that remove the protective 5'-cap from both host and viral mRNAs to commit transcripts for decay by the cellular exonuclease XRN1. Preferentially targets spliced mRNAs and since all viral genes are intronless, it preferentially targets host over viral transcripts. Acceleration of the turnover of cellular transcripts promotes the shutoff of host protein synthesis and therefore diminish the magnitude of antiviral response.</text>
</comment>
<comment type="cofactor">
    <cofactor evidence="2">
        <name>Mg(2+)</name>
        <dbReference type="ChEBI" id="CHEBI:18420"/>
    </cofactor>
    <cofactor evidence="2">
        <name>Mn(2+)</name>
        <dbReference type="ChEBI" id="CHEBI:29035"/>
    </cofactor>
</comment>
<comment type="subcellular location">
    <subcellularLocation>
        <location evidence="2">Host mitochondrion</location>
    </subcellularLocation>
    <text evidence="2">Mitochondria localization is required to efficiently decap mRNAs.</text>
</comment>
<comment type="induction">
    <text>Expressed in the late phase of the viral replicative cycle.</text>
</comment>
<comment type="similarity">
    <text evidence="4">Belongs to the Nudix hydrolase family.</text>
</comment>
<keyword id="KW-1045">Host mitochondrion</keyword>
<keyword id="KW-0378">Hydrolase</keyword>
<keyword id="KW-0460">Magnesium</keyword>
<keyword id="KW-0464">Manganese</keyword>
<keyword id="KW-0479">Metal-binding</keyword>
<keyword id="KW-1185">Reference proteome</keyword>
<proteinExistence type="evidence at transcript level"/>
<evidence type="ECO:0000250" key="1"/>
<evidence type="ECO:0000250" key="2">
    <source>
        <dbReference type="UniProtKB" id="P04312"/>
    </source>
</evidence>
<evidence type="ECO:0000255" key="3">
    <source>
        <dbReference type="PROSITE-ProRule" id="PRU00794"/>
    </source>
</evidence>
<evidence type="ECO:0000305" key="4"/>
<reference key="1">
    <citation type="journal article" date="1993" name="Virus Res.">
        <title>Nucleotide sequence analysis of variola virus HindIII M, L, I genome fragments.</title>
        <authorList>
            <person name="Shchelkunov S.N."/>
            <person name="Blinov V.M."/>
            <person name="Totmenin A.V."/>
            <person name="Marennikova S.S."/>
            <person name="Kolykhalov A.A."/>
            <person name="Frolov I.V."/>
            <person name="Chizhikov V.E."/>
            <person name="Gytorov V.V."/>
            <person name="Gashikov P.V."/>
            <person name="Belanov E.F."/>
            <person name="Belavin P.A."/>
            <person name="Resenchuk S.M."/>
            <person name="Andzhaparidze O.G."/>
            <person name="Sandakhchiev L.S."/>
        </authorList>
    </citation>
    <scope>NUCLEOTIDE SEQUENCE [GENOMIC DNA]</scope>
</reference>
<reference key="2">
    <citation type="journal article" date="1993" name="FEBS Lett.">
        <title>Genes of variola and vaccinia viruses necessary to overcome the host protective mechanisms.</title>
        <authorList>
            <person name="Shchelkunov S.N."/>
            <person name="Blinov V.M."/>
            <person name="Sandakhchiev L.S."/>
        </authorList>
    </citation>
    <scope>NUCLEOTIDE SEQUENCE [LARGE SCALE GENOMIC DNA]</scope>
</reference>
<accession>P33071</accession>
<organismHost>
    <name type="scientific">Homo sapiens</name>
    <name type="common">Human</name>
    <dbReference type="NCBI Taxonomy" id="9606"/>
</organismHost>
<gene>
    <name type="primary">OPG122</name>
    <name type="ORF">D10R</name>
</gene>
<dbReference type="EC" id="3.1.3.-"/>
<dbReference type="EMBL" id="X67119">
    <property type="protein sequence ID" value="CAA47599.1"/>
    <property type="molecule type" value="Genomic_DNA"/>
</dbReference>
<dbReference type="EMBL" id="X69198">
    <property type="protein sequence ID" value="CAA49041.1"/>
    <property type="molecule type" value="Genomic_DNA"/>
</dbReference>
<dbReference type="PIR" id="S33114">
    <property type="entry name" value="S33114"/>
</dbReference>
<dbReference type="SMR" id="P33071"/>
<dbReference type="KEGG" id="vg:1486416"/>
<dbReference type="Proteomes" id="UP000002060">
    <property type="component" value="Segment"/>
</dbReference>
<dbReference type="GO" id="GO:0033650">
    <property type="term" value="C:host cell mitochondrion"/>
    <property type="evidence" value="ECO:0007669"/>
    <property type="project" value="UniProtKB-SubCell"/>
</dbReference>
<dbReference type="GO" id="GO:0046872">
    <property type="term" value="F:metal ion binding"/>
    <property type="evidence" value="ECO:0007669"/>
    <property type="project" value="UniProtKB-KW"/>
</dbReference>
<dbReference type="GO" id="GO:0016791">
    <property type="term" value="F:phosphatase activity"/>
    <property type="evidence" value="ECO:0007669"/>
    <property type="project" value="InterPro"/>
</dbReference>
<dbReference type="Gene3D" id="3.90.79.10">
    <property type="entry name" value="Nucleoside Triphosphate Pyrophosphohydrolase"/>
    <property type="match status" value="1"/>
</dbReference>
<dbReference type="InterPro" id="IPR015797">
    <property type="entry name" value="NUDIX_hydrolase-like_dom_sf"/>
</dbReference>
<dbReference type="InterPro" id="IPR020084">
    <property type="entry name" value="NUDIX_hydrolase_CS"/>
</dbReference>
<dbReference type="InterPro" id="IPR000086">
    <property type="entry name" value="NUDIX_hydrolase_dom"/>
</dbReference>
<dbReference type="InterPro" id="IPR003301">
    <property type="entry name" value="Vaccinia_D10_decapping"/>
</dbReference>
<dbReference type="InterPro" id="IPR013683">
    <property type="entry name" value="Vaccinia_D10_N"/>
</dbReference>
<dbReference type="Pfam" id="PF00293">
    <property type="entry name" value="NUDIX"/>
    <property type="match status" value="1"/>
</dbReference>
<dbReference type="Pfam" id="PF08476">
    <property type="entry name" value="VD10_N"/>
    <property type="match status" value="1"/>
</dbReference>
<dbReference type="PRINTS" id="PR01364">
    <property type="entry name" value="VD10PROTEIN"/>
</dbReference>
<dbReference type="SUPFAM" id="SSF55811">
    <property type="entry name" value="Nudix"/>
    <property type="match status" value="1"/>
</dbReference>
<dbReference type="PROSITE" id="PS51462">
    <property type="entry name" value="NUDIX"/>
    <property type="match status" value="1"/>
</dbReference>
<dbReference type="PROSITE" id="PS00893">
    <property type="entry name" value="NUDIX_BOX"/>
    <property type="match status" value="1"/>
</dbReference>
<feature type="chain" id="PRO_0000057099" description="mRNA-decapping protein OPG122">
    <location>
        <begin position="1"/>
        <end position="248"/>
    </location>
</feature>
<feature type="domain" description="Nudix hydrolase" evidence="3">
    <location>
        <begin position="45"/>
        <end position="227"/>
    </location>
</feature>
<feature type="short sequence motif" description="Nudix box" evidence="3">
    <location>
        <begin position="125"/>
        <end position="147"/>
    </location>
</feature>
<feature type="active site" description="Nucleophile" evidence="1">
    <location>
        <position position="141"/>
    </location>
</feature>
<feature type="binding site" evidence="1">
    <location>
        <position position="132"/>
    </location>
    <ligand>
        <name>Mg(2+)</name>
        <dbReference type="ChEBI" id="CHEBI:18420"/>
    </ligand>
</feature>
<feature type="binding site" evidence="1">
    <location>
        <position position="145"/>
    </location>
    <ligand>
        <name>Mn(2+)</name>
        <dbReference type="ChEBI" id="CHEBI:29035"/>
    </ligand>
</feature>
<feature type="binding site" evidence="1">
    <location>
        <position position="167"/>
    </location>
    <ligand>
        <name>Mg(2+)</name>
        <dbReference type="ChEBI" id="CHEBI:18420"/>
    </ligand>
</feature>
<sequence>MNFYRSSIISQIIKYNRRLAKSIICEDDSQIITLTAFVNQCLWCHKRVSVSAILLTTDNKILVCNRRDSFLYSEIIRTRNMSRKKRLFLNYSNYLNKQERSILSSFFSLDPATIDNDRIDAIYPGGILKRGENVPECLSREIKEEVNIDNSFVFIDTRFFIHGIIEDTIINKFFEVIFFVGRISLTSDQIIDTFKSNHEIKDLIFLDPNSGNGLQYEIAKYALDTAKLKCYGHRGCYYESLKKLTEDD</sequence>
<protein>
    <recommendedName>
        <fullName>mRNA-decapping protein OPG122</fullName>
        <ecNumber>3.1.3.-</ecNumber>
    </recommendedName>
</protein>